<proteinExistence type="inferred from homology"/>
<gene>
    <name evidence="1" type="primary">nadK</name>
    <name type="ordered locus">ACP_0680</name>
</gene>
<reference key="1">
    <citation type="journal article" date="2009" name="Appl. Environ. Microbiol.">
        <title>Three genomes from the phylum Acidobacteria provide insight into the lifestyles of these microorganisms in soils.</title>
        <authorList>
            <person name="Ward N.L."/>
            <person name="Challacombe J.F."/>
            <person name="Janssen P.H."/>
            <person name="Henrissat B."/>
            <person name="Coutinho P.M."/>
            <person name="Wu M."/>
            <person name="Xie G."/>
            <person name="Haft D.H."/>
            <person name="Sait M."/>
            <person name="Badger J."/>
            <person name="Barabote R.D."/>
            <person name="Bradley B."/>
            <person name="Brettin T.S."/>
            <person name="Brinkac L.M."/>
            <person name="Bruce D."/>
            <person name="Creasy T."/>
            <person name="Daugherty S.C."/>
            <person name="Davidsen T.M."/>
            <person name="DeBoy R.T."/>
            <person name="Detter J.C."/>
            <person name="Dodson R.J."/>
            <person name="Durkin A.S."/>
            <person name="Ganapathy A."/>
            <person name="Gwinn-Giglio M."/>
            <person name="Han C.S."/>
            <person name="Khouri H."/>
            <person name="Kiss H."/>
            <person name="Kothari S.P."/>
            <person name="Madupu R."/>
            <person name="Nelson K.E."/>
            <person name="Nelson W.C."/>
            <person name="Paulsen I."/>
            <person name="Penn K."/>
            <person name="Ren Q."/>
            <person name="Rosovitz M.J."/>
            <person name="Selengut J.D."/>
            <person name="Shrivastava S."/>
            <person name="Sullivan S.A."/>
            <person name="Tapia R."/>
            <person name="Thompson L.S."/>
            <person name="Watkins K.L."/>
            <person name="Yang Q."/>
            <person name="Yu C."/>
            <person name="Zafar N."/>
            <person name="Zhou L."/>
            <person name="Kuske C.R."/>
        </authorList>
    </citation>
    <scope>NUCLEOTIDE SEQUENCE [LARGE SCALE GENOMIC DNA]</scope>
    <source>
        <strain>ATCC 51196 / DSM 11244 / BCRC 80197 / JCM 7670 / NBRC 15755 / NCIMB 13165 / 161</strain>
    </source>
</reference>
<organism>
    <name type="scientific">Acidobacterium capsulatum (strain ATCC 51196 / DSM 11244 / BCRC 80197 / JCM 7670 / NBRC 15755 / NCIMB 13165 / 161)</name>
    <dbReference type="NCBI Taxonomy" id="240015"/>
    <lineage>
        <taxon>Bacteria</taxon>
        <taxon>Pseudomonadati</taxon>
        <taxon>Acidobacteriota</taxon>
        <taxon>Terriglobia</taxon>
        <taxon>Terriglobales</taxon>
        <taxon>Acidobacteriaceae</taxon>
        <taxon>Acidobacterium</taxon>
    </lineage>
</organism>
<name>NADK_ACIC5</name>
<comment type="function">
    <text evidence="1">Involved in the regulation of the intracellular balance of NAD and NADP, and is a key enzyme in the biosynthesis of NADP. Catalyzes specifically the phosphorylation on 2'-hydroxyl of the adenosine moiety of NAD to yield NADP.</text>
</comment>
<comment type="catalytic activity">
    <reaction evidence="1">
        <text>NAD(+) + ATP = ADP + NADP(+) + H(+)</text>
        <dbReference type="Rhea" id="RHEA:18629"/>
        <dbReference type="ChEBI" id="CHEBI:15378"/>
        <dbReference type="ChEBI" id="CHEBI:30616"/>
        <dbReference type="ChEBI" id="CHEBI:57540"/>
        <dbReference type="ChEBI" id="CHEBI:58349"/>
        <dbReference type="ChEBI" id="CHEBI:456216"/>
        <dbReference type="EC" id="2.7.1.23"/>
    </reaction>
</comment>
<comment type="cofactor">
    <cofactor evidence="1">
        <name>a divalent metal cation</name>
        <dbReference type="ChEBI" id="CHEBI:60240"/>
    </cofactor>
</comment>
<comment type="subcellular location">
    <subcellularLocation>
        <location evidence="1">Cytoplasm</location>
    </subcellularLocation>
</comment>
<comment type="similarity">
    <text evidence="1">Belongs to the NAD kinase family.</text>
</comment>
<evidence type="ECO:0000255" key="1">
    <source>
        <dbReference type="HAMAP-Rule" id="MF_00361"/>
    </source>
</evidence>
<sequence length="285" mass="30749">MRRIAVIAKPQKDELASLLPELLAWLHGHGYDPVIDDIAATYTSEARIVPRADLPNENPELVIVLGGDGTLLAAARVFAKTGVPILSVNLGSLGFLTEVPLGDLYRHLEGWAQNCCNIEQRAMLHCELRRDGHQVCEYEALNDVVVSKGAIARMGDFRIDLDGALVAAFRADGVIISTPTGSTAYSLAANGPILAPNVDALIVTPVCPHLLTLRPLVVQGNADLKLKVAGIPDQTYLTVDGQEAIALCVGDEIHCRKSVYTVKLVRLGSTGFFDVLRAKLKWGER</sequence>
<keyword id="KW-0067">ATP-binding</keyword>
<keyword id="KW-0963">Cytoplasm</keyword>
<keyword id="KW-0418">Kinase</keyword>
<keyword id="KW-0520">NAD</keyword>
<keyword id="KW-0521">NADP</keyword>
<keyword id="KW-0547">Nucleotide-binding</keyword>
<keyword id="KW-1185">Reference proteome</keyword>
<keyword id="KW-0808">Transferase</keyword>
<accession>C1F1S2</accession>
<feature type="chain" id="PRO_1000133556" description="NAD kinase">
    <location>
        <begin position="1"/>
        <end position="285"/>
    </location>
</feature>
<feature type="active site" description="Proton acceptor" evidence="1">
    <location>
        <position position="68"/>
    </location>
</feature>
<feature type="binding site" evidence="1">
    <location>
        <begin position="68"/>
        <end position="69"/>
    </location>
    <ligand>
        <name>NAD(+)</name>
        <dbReference type="ChEBI" id="CHEBI:57540"/>
    </ligand>
</feature>
<feature type="binding site" evidence="1">
    <location>
        <begin position="142"/>
        <end position="143"/>
    </location>
    <ligand>
        <name>NAD(+)</name>
        <dbReference type="ChEBI" id="CHEBI:57540"/>
    </ligand>
</feature>
<feature type="binding site" evidence="1">
    <location>
        <position position="153"/>
    </location>
    <ligand>
        <name>NAD(+)</name>
        <dbReference type="ChEBI" id="CHEBI:57540"/>
    </ligand>
</feature>
<feature type="binding site" evidence="1">
    <location>
        <position position="170"/>
    </location>
    <ligand>
        <name>NAD(+)</name>
        <dbReference type="ChEBI" id="CHEBI:57540"/>
    </ligand>
</feature>
<feature type="binding site" evidence="1">
    <location>
        <position position="172"/>
    </location>
    <ligand>
        <name>NAD(+)</name>
        <dbReference type="ChEBI" id="CHEBI:57540"/>
    </ligand>
</feature>
<feature type="binding site" evidence="1">
    <location>
        <position position="242"/>
    </location>
    <ligand>
        <name>NAD(+)</name>
        <dbReference type="ChEBI" id="CHEBI:57540"/>
    </ligand>
</feature>
<protein>
    <recommendedName>
        <fullName evidence="1">NAD kinase</fullName>
        <ecNumber evidence="1">2.7.1.23</ecNumber>
    </recommendedName>
    <alternativeName>
        <fullName evidence="1">ATP-dependent NAD kinase</fullName>
    </alternativeName>
</protein>
<dbReference type="EC" id="2.7.1.23" evidence="1"/>
<dbReference type="EMBL" id="CP001472">
    <property type="protein sequence ID" value="ACO32179.1"/>
    <property type="molecule type" value="Genomic_DNA"/>
</dbReference>
<dbReference type="RefSeq" id="WP_015895856.1">
    <property type="nucleotide sequence ID" value="NC_012483.1"/>
</dbReference>
<dbReference type="SMR" id="C1F1S2"/>
<dbReference type="FunCoup" id="C1F1S2">
    <property type="interactions" value="525"/>
</dbReference>
<dbReference type="STRING" id="240015.ACP_0680"/>
<dbReference type="KEGG" id="aca:ACP_0680"/>
<dbReference type="eggNOG" id="COG0061">
    <property type="taxonomic scope" value="Bacteria"/>
</dbReference>
<dbReference type="HOGENOM" id="CLU_008831_0_1_0"/>
<dbReference type="InParanoid" id="C1F1S2"/>
<dbReference type="OrthoDB" id="9774737at2"/>
<dbReference type="Proteomes" id="UP000002207">
    <property type="component" value="Chromosome"/>
</dbReference>
<dbReference type="GO" id="GO:0005737">
    <property type="term" value="C:cytoplasm"/>
    <property type="evidence" value="ECO:0007669"/>
    <property type="project" value="UniProtKB-SubCell"/>
</dbReference>
<dbReference type="GO" id="GO:0005524">
    <property type="term" value="F:ATP binding"/>
    <property type="evidence" value="ECO:0007669"/>
    <property type="project" value="UniProtKB-KW"/>
</dbReference>
<dbReference type="GO" id="GO:0046872">
    <property type="term" value="F:metal ion binding"/>
    <property type="evidence" value="ECO:0007669"/>
    <property type="project" value="UniProtKB-UniRule"/>
</dbReference>
<dbReference type="GO" id="GO:0051287">
    <property type="term" value="F:NAD binding"/>
    <property type="evidence" value="ECO:0007669"/>
    <property type="project" value="UniProtKB-ARBA"/>
</dbReference>
<dbReference type="GO" id="GO:0003951">
    <property type="term" value="F:NAD+ kinase activity"/>
    <property type="evidence" value="ECO:0007669"/>
    <property type="project" value="UniProtKB-UniRule"/>
</dbReference>
<dbReference type="GO" id="GO:0019674">
    <property type="term" value="P:NAD metabolic process"/>
    <property type="evidence" value="ECO:0007669"/>
    <property type="project" value="InterPro"/>
</dbReference>
<dbReference type="GO" id="GO:0006741">
    <property type="term" value="P:NADP biosynthetic process"/>
    <property type="evidence" value="ECO:0007669"/>
    <property type="project" value="UniProtKB-UniRule"/>
</dbReference>
<dbReference type="Gene3D" id="3.40.50.10330">
    <property type="entry name" value="Probable inorganic polyphosphate/atp-NAD kinase, domain 1"/>
    <property type="match status" value="1"/>
</dbReference>
<dbReference type="Gene3D" id="2.60.200.30">
    <property type="entry name" value="Probable inorganic polyphosphate/atp-NAD kinase, domain 2"/>
    <property type="match status" value="1"/>
</dbReference>
<dbReference type="HAMAP" id="MF_00361">
    <property type="entry name" value="NAD_kinase"/>
    <property type="match status" value="1"/>
</dbReference>
<dbReference type="InterPro" id="IPR017438">
    <property type="entry name" value="ATP-NAD_kinase_N"/>
</dbReference>
<dbReference type="InterPro" id="IPR017437">
    <property type="entry name" value="ATP-NAD_kinase_PpnK-typ_C"/>
</dbReference>
<dbReference type="InterPro" id="IPR016064">
    <property type="entry name" value="NAD/diacylglycerol_kinase_sf"/>
</dbReference>
<dbReference type="InterPro" id="IPR002504">
    <property type="entry name" value="NADK"/>
</dbReference>
<dbReference type="PANTHER" id="PTHR20275">
    <property type="entry name" value="NAD KINASE"/>
    <property type="match status" value="1"/>
</dbReference>
<dbReference type="PANTHER" id="PTHR20275:SF0">
    <property type="entry name" value="NAD KINASE"/>
    <property type="match status" value="1"/>
</dbReference>
<dbReference type="Pfam" id="PF01513">
    <property type="entry name" value="NAD_kinase"/>
    <property type="match status" value="1"/>
</dbReference>
<dbReference type="Pfam" id="PF20143">
    <property type="entry name" value="NAD_kinase_C"/>
    <property type="match status" value="1"/>
</dbReference>
<dbReference type="SUPFAM" id="SSF111331">
    <property type="entry name" value="NAD kinase/diacylglycerol kinase-like"/>
    <property type="match status" value="1"/>
</dbReference>